<keyword id="KW-0963">Cytoplasm</keyword>
<keyword id="KW-0378">Hydrolase</keyword>
<keyword id="KW-0520">NAD</keyword>
<keyword id="KW-0554">One-carbon metabolism</keyword>
<keyword id="KW-1185">Reference proteome</keyword>
<organism>
    <name type="scientific">Burkholderia pseudomallei (strain K96243)</name>
    <dbReference type="NCBI Taxonomy" id="272560"/>
    <lineage>
        <taxon>Bacteria</taxon>
        <taxon>Pseudomonadati</taxon>
        <taxon>Pseudomonadota</taxon>
        <taxon>Betaproteobacteria</taxon>
        <taxon>Burkholderiales</taxon>
        <taxon>Burkholderiaceae</taxon>
        <taxon>Burkholderia</taxon>
        <taxon>pseudomallei group</taxon>
    </lineage>
</organism>
<sequence>MNAAVIDSHSAQDYVVADIALAGWGRKELNIAETEMPGLVQIRDEYKAQQPLKGARIAGSLHMTIQTGVLIETLKALGADVRWASCNIFSTQDHAAAAIVEAGTPVFAFKGESLDEYWEFSHRIFEWPNGEFANMILDDGGDATLLLILGSKAEKDRSVIARPTNEEEVALFKSIERHLEIDGSWYSKRLAHIKGVTEETTTGVHRLYQMEKDGRLPFPAFNVNDSVTKSKFDNLYGCRESLVDGIKRATDVMIAGKIAVVAGYGDVGKGCAQSLRGLGATVWVTEIDPICALQAAMEGYRVVTMEYAADKADIFVTATGNYHVINHDHMKAMRHNAIVCNIGHFDSEIDVASTRQYQWENIKPQVDHIIFPDGKRVILLAEGRLVNLGCATGHPSFVMSNSFTNQTLAQIELFTRGGEYANKVYVLPKHLDEKVARLHLARIGAQLSELSDDQAAYIGVSKAGPFKPDHYRY</sequence>
<reference key="1">
    <citation type="journal article" date="2004" name="Proc. Natl. Acad. Sci. U.S.A.">
        <title>Genomic plasticity of the causative agent of melioidosis, Burkholderia pseudomallei.</title>
        <authorList>
            <person name="Holden M.T.G."/>
            <person name="Titball R.W."/>
            <person name="Peacock S.J."/>
            <person name="Cerdeno-Tarraga A.-M."/>
            <person name="Atkins T."/>
            <person name="Crossman L.C."/>
            <person name="Pitt T."/>
            <person name="Churcher C."/>
            <person name="Mungall K.L."/>
            <person name="Bentley S.D."/>
            <person name="Sebaihia M."/>
            <person name="Thomson N.R."/>
            <person name="Bason N."/>
            <person name="Beacham I.R."/>
            <person name="Brooks K."/>
            <person name="Brown K.A."/>
            <person name="Brown N.F."/>
            <person name="Challis G.L."/>
            <person name="Cherevach I."/>
            <person name="Chillingworth T."/>
            <person name="Cronin A."/>
            <person name="Crossett B."/>
            <person name="Davis P."/>
            <person name="DeShazer D."/>
            <person name="Feltwell T."/>
            <person name="Fraser A."/>
            <person name="Hance Z."/>
            <person name="Hauser H."/>
            <person name="Holroyd S."/>
            <person name="Jagels K."/>
            <person name="Keith K.E."/>
            <person name="Maddison M."/>
            <person name="Moule S."/>
            <person name="Price C."/>
            <person name="Quail M.A."/>
            <person name="Rabbinowitsch E."/>
            <person name="Rutherford K."/>
            <person name="Sanders M."/>
            <person name="Simmonds M."/>
            <person name="Songsivilai S."/>
            <person name="Stevens K."/>
            <person name="Tumapa S."/>
            <person name="Vesaratchavest M."/>
            <person name="Whitehead S."/>
            <person name="Yeats C."/>
            <person name="Barrell B.G."/>
            <person name="Oyston P.C.F."/>
            <person name="Parkhill J."/>
        </authorList>
    </citation>
    <scope>NUCLEOTIDE SEQUENCE [LARGE SCALE GENOMIC DNA]</scope>
    <source>
        <strain>K96243</strain>
    </source>
</reference>
<proteinExistence type="inferred from homology"/>
<comment type="function">
    <text evidence="1">May play a key role in the regulation of the intracellular concentration of adenosylhomocysteine.</text>
</comment>
<comment type="catalytic activity">
    <reaction evidence="1">
        <text>S-adenosyl-L-homocysteine + H2O = L-homocysteine + adenosine</text>
        <dbReference type="Rhea" id="RHEA:21708"/>
        <dbReference type="ChEBI" id="CHEBI:15377"/>
        <dbReference type="ChEBI" id="CHEBI:16335"/>
        <dbReference type="ChEBI" id="CHEBI:57856"/>
        <dbReference type="ChEBI" id="CHEBI:58199"/>
        <dbReference type="EC" id="3.13.2.1"/>
    </reaction>
</comment>
<comment type="cofactor">
    <cofactor evidence="1">
        <name>NAD(+)</name>
        <dbReference type="ChEBI" id="CHEBI:57540"/>
    </cofactor>
    <text evidence="1">Binds 1 NAD(+) per subunit.</text>
</comment>
<comment type="pathway">
    <text evidence="1">Amino-acid biosynthesis; L-homocysteine biosynthesis; L-homocysteine from S-adenosyl-L-homocysteine: step 1/1.</text>
</comment>
<comment type="subcellular location">
    <subcellularLocation>
        <location evidence="1">Cytoplasm</location>
    </subcellularLocation>
</comment>
<comment type="similarity">
    <text evidence="1">Belongs to the adenosylhomocysteinase family.</text>
</comment>
<protein>
    <recommendedName>
        <fullName evidence="1">Adenosylhomocysteinase</fullName>
        <ecNumber evidence="1">3.13.2.1</ecNumber>
    </recommendedName>
    <alternativeName>
        <fullName evidence="1">S-adenosyl-L-homocysteine hydrolase</fullName>
        <shortName evidence="1">AdoHcyase</shortName>
    </alternativeName>
</protein>
<dbReference type="EC" id="3.13.2.1" evidence="1"/>
<dbReference type="EMBL" id="BX571965">
    <property type="protein sequence ID" value="CAH37303.1"/>
    <property type="molecule type" value="Genomic_DNA"/>
</dbReference>
<dbReference type="RefSeq" id="WP_004198634.1">
    <property type="nucleotide sequence ID" value="NZ_CP009538.1"/>
</dbReference>
<dbReference type="RefSeq" id="YP_109886.1">
    <property type="nucleotide sequence ID" value="NC_006350.1"/>
</dbReference>
<dbReference type="SMR" id="Q63PT2"/>
<dbReference type="STRING" id="272560.BPSL3290"/>
<dbReference type="GeneID" id="93061911"/>
<dbReference type="KEGG" id="bps:BPSL3290"/>
<dbReference type="PATRIC" id="fig|272560.51.peg.1928"/>
<dbReference type="eggNOG" id="COG0499">
    <property type="taxonomic scope" value="Bacteria"/>
</dbReference>
<dbReference type="UniPathway" id="UPA00314">
    <property type="reaction ID" value="UER00076"/>
</dbReference>
<dbReference type="Proteomes" id="UP000000605">
    <property type="component" value="Chromosome 1"/>
</dbReference>
<dbReference type="GO" id="GO:0005829">
    <property type="term" value="C:cytosol"/>
    <property type="evidence" value="ECO:0007669"/>
    <property type="project" value="TreeGrafter"/>
</dbReference>
<dbReference type="GO" id="GO:0004013">
    <property type="term" value="F:adenosylhomocysteinase activity"/>
    <property type="evidence" value="ECO:0007669"/>
    <property type="project" value="UniProtKB-UniRule"/>
</dbReference>
<dbReference type="GO" id="GO:0071269">
    <property type="term" value="P:L-homocysteine biosynthetic process"/>
    <property type="evidence" value="ECO:0007669"/>
    <property type="project" value="UniProtKB-UniRule"/>
</dbReference>
<dbReference type="GO" id="GO:0006730">
    <property type="term" value="P:one-carbon metabolic process"/>
    <property type="evidence" value="ECO:0007669"/>
    <property type="project" value="UniProtKB-KW"/>
</dbReference>
<dbReference type="GO" id="GO:0033353">
    <property type="term" value="P:S-adenosylmethionine cycle"/>
    <property type="evidence" value="ECO:0007669"/>
    <property type="project" value="TreeGrafter"/>
</dbReference>
<dbReference type="CDD" id="cd00401">
    <property type="entry name" value="SAHH"/>
    <property type="match status" value="1"/>
</dbReference>
<dbReference type="FunFam" id="3.40.50.720:FF:000004">
    <property type="entry name" value="Adenosylhomocysteinase"/>
    <property type="match status" value="1"/>
</dbReference>
<dbReference type="Gene3D" id="3.40.50.1480">
    <property type="entry name" value="Adenosylhomocysteinase-like"/>
    <property type="match status" value="1"/>
</dbReference>
<dbReference type="Gene3D" id="3.40.50.720">
    <property type="entry name" value="NAD(P)-binding Rossmann-like Domain"/>
    <property type="match status" value="1"/>
</dbReference>
<dbReference type="HAMAP" id="MF_00563">
    <property type="entry name" value="AdoHcyase"/>
    <property type="match status" value="1"/>
</dbReference>
<dbReference type="InterPro" id="IPR042172">
    <property type="entry name" value="Adenosylhomocyst_ase-like_sf"/>
</dbReference>
<dbReference type="InterPro" id="IPR000043">
    <property type="entry name" value="Adenosylhomocysteinase-like"/>
</dbReference>
<dbReference type="InterPro" id="IPR015878">
    <property type="entry name" value="Ado_hCys_hydrolase_NAD-bd"/>
</dbReference>
<dbReference type="InterPro" id="IPR036291">
    <property type="entry name" value="NAD(P)-bd_dom_sf"/>
</dbReference>
<dbReference type="InterPro" id="IPR020082">
    <property type="entry name" value="S-Ado-L-homoCys_hydrolase_CS"/>
</dbReference>
<dbReference type="NCBIfam" id="TIGR00936">
    <property type="entry name" value="ahcY"/>
    <property type="match status" value="1"/>
</dbReference>
<dbReference type="NCBIfam" id="NF004005">
    <property type="entry name" value="PRK05476.2-3"/>
    <property type="match status" value="1"/>
</dbReference>
<dbReference type="PANTHER" id="PTHR23420">
    <property type="entry name" value="ADENOSYLHOMOCYSTEINASE"/>
    <property type="match status" value="1"/>
</dbReference>
<dbReference type="PANTHER" id="PTHR23420:SF0">
    <property type="entry name" value="ADENOSYLHOMOCYSTEINASE"/>
    <property type="match status" value="1"/>
</dbReference>
<dbReference type="Pfam" id="PF05221">
    <property type="entry name" value="AdoHcyase"/>
    <property type="match status" value="1"/>
</dbReference>
<dbReference type="Pfam" id="PF00670">
    <property type="entry name" value="AdoHcyase_NAD"/>
    <property type="match status" value="1"/>
</dbReference>
<dbReference type="PIRSF" id="PIRSF001109">
    <property type="entry name" value="Ad_hcy_hydrolase"/>
    <property type="match status" value="1"/>
</dbReference>
<dbReference type="SMART" id="SM00996">
    <property type="entry name" value="AdoHcyase"/>
    <property type="match status" value="1"/>
</dbReference>
<dbReference type="SMART" id="SM00997">
    <property type="entry name" value="AdoHcyase_NAD"/>
    <property type="match status" value="1"/>
</dbReference>
<dbReference type="SUPFAM" id="SSF52283">
    <property type="entry name" value="Formate/glycerate dehydrogenase catalytic domain-like"/>
    <property type="match status" value="1"/>
</dbReference>
<dbReference type="SUPFAM" id="SSF51735">
    <property type="entry name" value="NAD(P)-binding Rossmann-fold domains"/>
    <property type="match status" value="1"/>
</dbReference>
<dbReference type="PROSITE" id="PS00738">
    <property type="entry name" value="ADOHCYASE_1"/>
    <property type="match status" value="1"/>
</dbReference>
<dbReference type="PROSITE" id="PS00739">
    <property type="entry name" value="ADOHCYASE_2"/>
    <property type="match status" value="1"/>
</dbReference>
<name>SAHH_BURPS</name>
<gene>
    <name evidence="1" type="primary">ahcY</name>
    <name type="ordered locus">BPSL3290</name>
</gene>
<accession>Q63PT2</accession>
<feature type="chain" id="PRO_0000116954" description="Adenosylhomocysteinase">
    <location>
        <begin position="1"/>
        <end position="473"/>
    </location>
</feature>
<feature type="binding site" evidence="1">
    <location>
        <position position="64"/>
    </location>
    <ligand>
        <name>substrate</name>
    </ligand>
</feature>
<feature type="binding site" evidence="1">
    <location>
        <position position="139"/>
    </location>
    <ligand>
        <name>substrate</name>
    </ligand>
</feature>
<feature type="binding site" evidence="1">
    <location>
        <position position="199"/>
    </location>
    <ligand>
        <name>substrate</name>
    </ligand>
</feature>
<feature type="binding site" evidence="1">
    <location>
        <begin position="200"/>
        <end position="202"/>
    </location>
    <ligand>
        <name>NAD(+)</name>
        <dbReference type="ChEBI" id="CHEBI:57540"/>
    </ligand>
</feature>
<feature type="binding site" evidence="1">
    <location>
        <position position="229"/>
    </location>
    <ligand>
        <name>substrate</name>
    </ligand>
</feature>
<feature type="binding site" evidence="1">
    <location>
        <position position="233"/>
    </location>
    <ligand>
        <name>substrate</name>
    </ligand>
</feature>
<feature type="binding site" evidence="1">
    <location>
        <position position="234"/>
    </location>
    <ligand>
        <name>NAD(+)</name>
        <dbReference type="ChEBI" id="CHEBI:57540"/>
    </ligand>
</feature>
<feature type="binding site" evidence="1">
    <location>
        <begin position="263"/>
        <end position="268"/>
    </location>
    <ligand>
        <name>NAD(+)</name>
        <dbReference type="ChEBI" id="CHEBI:57540"/>
    </ligand>
</feature>
<feature type="binding site" evidence="1">
    <location>
        <position position="286"/>
    </location>
    <ligand>
        <name>NAD(+)</name>
        <dbReference type="ChEBI" id="CHEBI:57540"/>
    </ligand>
</feature>
<feature type="binding site" evidence="1">
    <location>
        <position position="321"/>
    </location>
    <ligand>
        <name>NAD(+)</name>
        <dbReference type="ChEBI" id="CHEBI:57540"/>
    </ligand>
</feature>
<feature type="binding site" evidence="1">
    <location>
        <begin position="342"/>
        <end position="344"/>
    </location>
    <ligand>
        <name>NAD(+)</name>
        <dbReference type="ChEBI" id="CHEBI:57540"/>
    </ligand>
</feature>
<feature type="binding site" evidence="1">
    <location>
        <position position="387"/>
    </location>
    <ligand>
        <name>NAD(+)</name>
        <dbReference type="ChEBI" id="CHEBI:57540"/>
    </ligand>
</feature>
<evidence type="ECO:0000255" key="1">
    <source>
        <dbReference type="HAMAP-Rule" id="MF_00563"/>
    </source>
</evidence>